<gene>
    <name evidence="1" type="primary">trpF</name>
    <name type="ordered locus">BT9727_1140</name>
</gene>
<keyword id="KW-0028">Amino-acid biosynthesis</keyword>
<keyword id="KW-0057">Aromatic amino acid biosynthesis</keyword>
<keyword id="KW-0413">Isomerase</keyword>
<keyword id="KW-0822">Tryptophan biosynthesis</keyword>
<accession>Q6HLU5</accession>
<reference key="1">
    <citation type="journal article" date="2006" name="J. Bacteriol.">
        <title>Pathogenomic sequence analysis of Bacillus cereus and Bacillus thuringiensis isolates closely related to Bacillus anthracis.</title>
        <authorList>
            <person name="Han C.S."/>
            <person name="Xie G."/>
            <person name="Challacombe J.F."/>
            <person name="Altherr M.R."/>
            <person name="Bhotika S.S."/>
            <person name="Bruce D."/>
            <person name="Campbell C.S."/>
            <person name="Campbell M.L."/>
            <person name="Chen J."/>
            <person name="Chertkov O."/>
            <person name="Cleland C."/>
            <person name="Dimitrijevic M."/>
            <person name="Doggett N.A."/>
            <person name="Fawcett J.J."/>
            <person name="Glavina T."/>
            <person name="Goodwin L.A."/>
            <person name="Hill K.K."/>
            <person name="Hitchcock P."/>
            <person name="Jackson P.J."/>
            <person name="Keim P."/>
            <person name="Kewalramani A.R."/>
            <person name="Longmire J."/>
            <person name="Lucas S."/>
            <person name="Malfatti S."/>
            <person name="McMurry K."/>
            <person name="Meincke L.J."/>
            <person name="Misra M."/>
            <person name="Moseman B.L."/>
            <person name="Mundt M."/>
            <person name="Munk A.C."/>
            <person name="Okinaka R.T."/>
            <person name="Parson-Quintana B."/>
            <person name="Reilly L.P."/>
            <person name="Richardson P."/>
            <person name="Robinson D.L."/>
            <person name="Rubin E."/>
            <person name="Saunders E."/>
            <person name="Tapia R."/>
            <person name="Tesmer J.G."/>
            <person name="Thayer N."/>
            <person name="Thompson L.S."/>
            <person name="Tice H."/>
            <person name="Ticknor L.O."/>
            <person name="Wills P.L."/>
            <person name="Brettin T.S."/>
            <person name="Gilna P."/>
        </authorList>
    </citation>
    <scope>NUCLEOTIDE SEQUENCE [LARGE SCALE GENOMIC DNA]</scope>
    <source>
        <strain>97-27</strain>
    </source>
</reference>
<organism>
    <name type="scientific">Bacillus thuringiensis subsp. konkukian (strain 97-27)</name>
    <dbReference type="NCBI Taxonomy" id="281309"/>
    <lineage>
        <taxon>Bacteria</taxon>
        <taxon>Bacillati</taxon>
        <taxon>Bacillota</taxon>
        <taxon>Bacilli</taxon>
        <taxon>Bacillales</taxon>
        <taxon>Bacillaceae</taxon>
        <taxon>Bacillus</taxon>
        <taxon>Bacillus cereus group</taxon>
    </lineage>
</organism>
<name>TRPF_BACHK</name>
<proteinExistence type="inferred from homology"/>
<protein>
    <recommendedName>
        <fullName evidence="1">N-(5'-phosphoribosyl)anthranilate isomerase</fullName>
        <shortName evidence="1">PRAI</shortName>
        <ecNumber evidence="1">5.3.1.24</ecNumber>
    </recommendedName>
</protein>
<dbReference type="EC" id="5.3.1.24" evidence="1"/>
<dbReference type="EMBL" id="AE017355">
    <property type="protein sequence ID" value="AAT59358.1"/>
    <property type="molecule type" value="Genomic_DNA"/>
</dbReference>
<dbReference type="RefSeq" id="WP_000865112.1">
    <property type="nucleotide sequence ID" value="NC_005957.1"/>
</dbReference>
<dbReference type="RefSeq" id="YP_035476.1">
    <property type="nucleotide sequence ID" value="NC_005957.1"/>
</dbReference>
<dbReference type="SMR" id="Q6HLU5"/>
<dbReference type="GeneID" id="45021252"/>
<dbReference type="KEGG" id="btk:BT9727_1140"/>
<dbReference type="PATRIC" id="fig|281309.8.peg.1199"/>
<dbReference type="HOGENOM" id="CLU_076364_1_0_9"/>
<dbReference type="UniPathway" id="UPA00035">
    <property type="reaction ID" value="UER00042"/>
</dbReference>
<dbReference type="Proteomes" id="UP000001301">
    <property type="component" value="Chromosome"/>
</dbReference>
<dbReference type="GO" id="GO:0004640">
    <property type="term" value="F:phosphoribosylanthranilate isomerase activity"/>
    <property type="evidence" value="ECO:0007669"/>
    <property type="project" value="UniProtKB-UniRule"/>
</dbReference>
<dbReference type="GO" id="GO:0000162">
    <property type="term" value="P:L-tryptophan biosynthetic process"/>
    <property type="evidence" value="ECO:0007669"/>
    <property type="project" value="UniProtKB-UniRule"/>
</dbReference>
<dbReference type="CDD" id="cd00405">
    <property type="entry name" value="PRAI"/>
    <property type="match status" value="1"/>
</dbReference>
<dbReference type="FunFam" id="3.20.20.70:FF:000075">
    <property type="entry name" value="Tryptophan biosynthesis protein TRP1"/>
    <property type="match status" value="1"/>
</dbReference>
<dbReference type="Gene3D" id="3.20.20.70">
    <property type="entry name" value="Aldolase class I"/>
    <property type="match status" value="1"/>
</dbReference>
<dbReference type="HAMAP" id="MF_00135">
    <property type="entry name" value="PRAI"/>
    <property type="match status" value="1"/>
</dbReference>
<dbReference type="InterPro" id="IPR013785">
    <property type="entry name" value="Aldolase_TIM"/>
</dbReference>
<dbReference type="InterPro" id="IPR001240">
    <property type="entry name" value="PRAI_dom"/>
</dbReference>
<dbReference type="InterPro" id="IPR011060">
    <property type="entry name" value="RibuloseP-bd_barrel"/>
</dbReference>
<dbReference type="InterPro" id="IPR044643">
    <property type="entry name" value="TrpF_fam"/>
</dbReference>
<dbReference type="NCBIfam" id="NF002297">
    <property type="entry name" value="PRK01222.1-3"/>
    <property type="match status" value="1"/>
</dbReference>
<dbReference type="PANTHER" id="PTHR42894">
    <property type="entry name" value="N-(5'-PHOSPHORIBOSYL)ANTHRANILATE ISOMERASE"/>
    <property type="match status" value="1"/>
</dbReference>
<dbReference type="PANTHER" id="PTHR42894:SF1">
    <property type="entry name" value="N-(5'-PHOSPHORIBOSYL)ANTHRANILATE ISOMERASE"/>
    <property type="match status" value="1"/>
</dbReference>
<dbReference type="Pfam" id="PF00697">
    <property type="entry name" value="PRAI"/>
    <property type="match status" value="1"/>
</dbReference>
<dbReference type="SUPFAM" id="SSF51366">
    <property type="entry name" value="Ribulose-phoshate binding barrel"/>
    <property type="match status" value="1"/>
</dbReference>
<sequence length="204" mass="22619">MKVKICGITDMETAKRACEYGADALGFVFAESKRKITPGLAKEIIQELPANVLKIGVFVNESVEVIQKITGNCGLTHVQLHGGEDNHQIRRLNIPSIKSLGVTSESDMKNAQGYETDYILFDSPKEKFHGGNGKTFPWELLAHMPKELREKTILAGGLNTLNIEEAIRTVRPYMVDVSSGVETEGKKDVEKIKQFIIKAKECSK</sequence>
<feature type="chain" id="PRO_1000018581" description="N-(5'-phosphoribosyl)anthranilate isomerase">
    <location>
        <begin position="1"/>
        <end position="204"/>
    </location>
</feature>
<comment type="catalytic activity">
    <reaction evidence="1">
        <text>N-(5-phospho-beta-D-ribosyl)anthranilate = 1-(2-carboxyphenylamino)-1-deoxy-D-ribulose 5-phosphate</text>
        <dbReference type="Rhea" id="RHEA:21540"/>
        <dbReference type="ChEBI" id="CHEBI:18277"/>
        <dbReference type="ChEBI" id="CHEBI:58613"/>
        <dbReference type="EC" id="5.3.1.24"/>
    </reaction>
</comment>
<comment type="pathway">
    <text evidence="1">Amino-acid biosynthesis; L-tryptophan biosynthesis; L-tryptophan from chorismate: step 3/5.</text>
</comment>
<comment type="similarity">
    <text evidence="1">Belongs to the TrpF family.</text>
</comment>
<evidence type="ECO:0000255" key="1">
    <source>
        <dbReference type="HAMAP-Rule" id="MF_00135"/>
    </source>
</evidence>